<feature type="chain" id="PRO_0000114641" description="Dynein heavy chain, cytoplasmic">
    <location>
        <begin position="1"/>
        <end position="4540"/>
    </location>
</feature>
<feature type="region of interest" description="Stem" evidence="1">
    <location>
        <begin position="1"/>
        <end position="1796"/>
    </location>
</feature>
<feature type="region of interest" description="AAA 1" evidence="1">
    <location>
        <begin position="1797"/>
        <end position="2018"/>
    </location>
</feature>
<feature type="region of interest" description="AAA 2" evidence="1">
    <location>
        <begin position="2091"/>
        <end position="2348"/>
    </location>
</feature>
<feature type="region of interest" description="AAA 3" evidence="1">
    <location>
        <begin position="2457"/>
        <end position="2705"/>
    </location>
</feature>
<feature type="region of interest" description="AAA 4" evidence="1">
    <location>
        <begin position="2796"/>
        <end position="3056"/>
    </location>
</feature>
<feature type="region of interest" description="Stalk" evidence="1">
    <location>
        <begin position="3076"/>
        <end position="3367"/>
    </location>
</feature>
<feature type="region of interest" description="Disordered" evidence="3">
    <location>
        <begin position="3140"/>
        <end position="3159"/>
    </location>
</feature>
<feature type="region of interest" description="AAA 5" evidence="1">
    <location>
        <begin position="3444"/>
        <end position="3673"/>
    </location>
</feature>
<feature type="region of interest" description="AAA 6" evidence="1">
    <location>
        <begin position="3908"/>
        <end position="4123"/>
    </location>
</feature>
<feature type="coiled-coil region" evidence="2">
    <location>
        <begin position="440"/>
        <end position="482"/>
    </location>
</feature>
<feature type="coiled-coil region" evidence="2">
    <location>
        <begin position="698"/>
        <end position="722"/>
    </location>
</feature>
<feature type="coiled-coil region" evidence="2">
    <location>
        <begin position="794"/>
        <end position="827"/>
    </location>
</feature>
<feature type="coiled-coil region" evidence="2">
    <location>
        <begin position="975"/>
        <end position="995"/>
    </location>
</feature>
<feature type="coiled-coil region" evidence="2">
    <location>
        <begin position="1169"/>
        <end position="1251"/>
    </location>
</feature>
<feature type="coiled-coil region" evidence="2">
    <location>
        <begin position="1295"/>
        <end position="1311"/>
    </location>
</feature>
<feature type="coiled-coil region" evidence="2">
    <location>
        <begin position="3076"/>
        <end position="3182"/>
    </location>
</feature>
<feature type="coiled-coil region" evidence="2">
    <location>
        <begin position="3289"/>
        <end position="3367"/>
    </location>
</feature>
<feature type="coiled-coil region" evidence="2">
    <location>
        <begin position="3653"/>
        <end position="3688"/>
    </location>
</feature>
<feature type="coiled-coil region" evidence="2">
    <location>
        <begin position="3820"/>
        <end position="3851"/>
    </location>
</feature>
<feature type="coiled-coil region" evidence="2">
    <location>
        <begin position="4238"/>
        <end position="4259"/>
    </location>
</feature>
<feature type="coiled-coil region" evidence="2">
    <location>
        <begin position="4313"/>
        <end position="4342"/>
    </location>
</feature>
<feature type="binding site" evidence="2">
    <location>
        <begin position="1835"/>
        <end position="1842"/>
    </location>
    <ligand>
        <name>ATP</name>
        <dbReference type="ChEBI" id="CHEBI:30616"/>
    </ligand>
</feature>
<feature type="binding site" evidence="2">
    <location>
        <begin position="2129"/>
        <end position="2136"/>
    </location>
    <ligand>
        <name>ATP</name>
        <dbReference type="ChEBI" id="CHEBI:30616"/>
    </ligand>
</feature>
<feature type="binding site" evidence="2">
    <location>
        <begin position="2496"/>
        <end position="2503"/>
    </location>
    <ligand>
        <name>ATP</name>
        <dbReference type="ChEBI" id="CHEBI:30616"/>
    </ligand>
</feature>
<feature type="binding site" evidence="2">
    <location>
        <begin position="2834"/>
        <end position="2841"/>
    </location>
    <ligand>
        <name>ATP</name>
        <dbReference type="ChEBI" id="CHEBI:30616"/>
    </ligand>
</feature>
<proteinExistence type="evidence at transcript level"/>
<keyword id="KW-0067">ATP-binding</keyword>
<keyword id="KW-0175">Coiled coil</keyword>
<keyword id="KW-0963">Cytoplasm</keyword>
<keyword id="KW-0206">Cytoskeleton</keyword>
<keyword id="KW-0243">Dynein</keyword>
<keyword id="KW-0493">Microtubule</keyword>
<keyword id="KW-0505">Motor protein</keyword>
<keyword id="KW-0547">Nucleotide-binding</keyword>
<keyword id="KW-0677">Repeat</keyword>
<organism>
    <name type="scientific">Paramecium tetraurelia</name>
    <dbReference type="NCBI Taxonomy" id="5888"/>
    <lineage>
        <taxon>Eukaryota</taxon>
        <taxon>Sar</taxon>
        <taxon>Alveolata</taxon>
        <taxon>Ciliophora</taxon>
        <taxon>Intramacronucleata</taxon>
        <taxon>Oligohymenophorea</taxon>
        <taxon>Peniculida</taxon>
        <taxon>Parameciidae</taxon>
        <taxon>Paramecium</taxon>
    </lineage>
</organism>
<dbReference type="EMBL" id="U20449">
    <property type="protein sequence ID" value="AAA75445.1"/>
    <property type="molecule type" value="Genomic_DNA"/>
</dbReference>
<dbReference type="EMBL" id="L17132">
    <property type="protein sequence ID" value="AAA61606.1"/>
    <property type="molecule type" value="mRNA"/>
</dbReference>
<dbReference type="PIR" id="T30838">
    <property type="entry name" value="T30838"/>
</dbReference>
<dbReference type="SMR" id="Q27171"/>
<dbReference type="eggNOG" id="KOG3595">
    <property type="taxonomic scope" value="Eukaryota"/>
</dbReference>
<dbReference type="GO" id="GO:0005737">
    <property type="term" value="C:cytoplasm"/>
    <property type="evidence" value="ECO:0007669"/>
    <property type="project" value="UniProtKB-KW"/>
</dbReference>
<dbReference type="GO" id="GO:0030286">
    <property type="term" value="C:dynein complex"/>
    <property type="evidence" value="ECO:0007669"/>
    <property type="project" value="UniProtKB-KW"/>
</dbReference>
<dbReference type="GO" id="GO:0005874">
    <property type="term" value="C:microtubule"/>
    <property type="evidence" value="ECO:0007669"/>
    <property type="project" value="UniProtKB-KW"/>
</dbReference>
<dbReference type="GO" id="GO:0005524">
    <property type="term" value="F:ATP binding"/>
    <property type="evidence" value="ECO:0007669"/>
    <property type="project" value="UniProtKB-KW"/>
</dbReference>
<dbReference type="GO" id="GO:0016887">
    <property type="term" value="F:ATP hydrolysis activity"/>
    <property type="evidence" value="ECO:0007669"/>
    <property type="project" value="InterPro"/>
</dbReference>
<dbReference type="GO" id="GO:0045505">
    <property type="term" value="F:dynein intermediate chain binding"/>
    <property type="evidence" value="ECO:0007669"/>
    <property type="project" value="InterPro"/>
</dbReference>
<dbReference type="GO" id="GO:0051959">
    <property type="term" value="F:dynein light intermediate chain binding"/>
    <property type="evidence" value="ECO:0007669"/>
    <property type="project" value="InterPro"/>
</dbReference>
<dbReference type="GO" id="GO:0008569">
    <property type="term" value="F:minus-end-directed microtubule motor activity"/>
    <property type="evidence" value="ECO:0007669"/>
    <property type="project" value="InterPro"/>
</dbReference>
<dbReference type="GO" id="GO:0007018">
    <property type="term" value="P:microtubule-based movement"/>
    <property type="evidence" value="ECO:0007669"/>
    <property type="project" value="InterPro"/>
</dbReference>
<dbReference type="CDD" id="cd00009">
    <property type="entry name" value="AAA"/>
    <property type="match status" value="2"/>
</dbReference>
<dbReference type="FunFam" id="3.40.50.300:FF:000122">
    <property type="entry name" value="Cytoplasmic dynein 1 heavy chain"/>
    <property type="match status" value="1"/>
</dbReference>
<dbReference type="FunFam" id="1.20.140.100:FF:000002">
    <property type="entry name" value="Cytoplasmic dynein heavy chain 1"/>
    <property type="match status" value="1"/>
</dbReference>
<dbReference type="FunFam" id="3.20.180.20:FF:000002">
    <property type="entry name" value="Cytoplasmic dynein heavy chain 1"/>
    <property type="match status" value="1"/>
</dbReference>
<dbReference type="FunFam" id="3.40.50.300:FF:000071">
    <property type="entry name" value="Cytoplasmic dynein heavy chain 1"/>
    <property type="match status" value="1"/>
</dbReference>
<dbReference type="FunFam" id="3.40.50.300:FF:000517">
    <property type="entry name" value="Cytoplasmic dynein heavy chain 1"/>
    <property type="match status" value="1"/>
</dbReference>
<dbReference type="FunFam" id="1.10.8.720:FF:000003">
    <property type="entry name" value="Cytoplasmic dynein heavy chain 2"/>
    <property type="match status" value="1"/>
</dbReference>
<dbReference type="FunFam" id="3.10.490.20:FF:000004">
    <property type="entry name" value="Cytoplasmic dynein heavy chain 2"/>
    <property type="match status" value="1"/>
</dbReference>
<dbReference type="FunFam" id="3.40.50.300:FF:000373">
    <property type="entry name" value="Cytoplasmic dynein heavy chain 2"/>
    <property type="match status" value="1"/>
</dbReference>
<dbReference type="FunFam" id="1.20.920.20:FF:000001">
    <property type="entry name" value="dynein heavy chain 2, axonemal"/>
    <property type="match status" value="1"/>
</dbReference>
<dbReference type="FunFam" id="1.10.8.710:FF:000009">
    <property type="entry name" value="Dynein heavy chain-like protein"/>
    <property type="match status" value="1"/>
</dbReference>
<dbReference type="FunFam" id="1.20.58.1120:FF:000013">
    <property type="entry name" value="Dynein heavy chain-like protein"/>
    <property type="match status" value="1"/>
</dbReference>
<dbReference type="Gene3D" id="1.10.287.2620">
    <property type="match status" value="1"/>
</dbReference>
<dbReference type="Gene3D" id="1.10.472.130">
    <property type="match status" value="1"/>
</dbReference>
<dbReference type="Gene3D" id="1.10.8.1220">
    <property type="match status" value="1"/>
</dbReference>
<dbReference type="Gene3D" id="1.10.8.710">
    <property type="match status" value="1"/>
</dbReference>
<dbReference type="Gene3D" id="1.20.1270.280">
    <property type="match status" value="1"/>
</dbReference>
<dbReference type="Gene3D" id="1.20.58.1120">
    <property type="match status" value="1"/>
</dbReference>
<dbReference type="Gene3D" id="1.20.920.20">
    <property type="match status" value="1"/>
</dbReference>
<dbReference type="Gene3D" id="1.20.920.30">
    <property type="match status" value="1"/>
</dbReference>
<dbReference type="Gene3D" id="3.10.490.20">
    <property type="match status" value="1"/>
</dbReference>
<dbReference type="Gene3D" id="6.10.140.1060">
    <property type="match status" value="1"/>
</dbReference>
<dbReference type="Gene3D" id="1.20.140.100">
    <property type="entry name" value="Dynein heavy chain, N-terminal domain 2"/>
    <property type="match status" value="1"/>
</dbReference>
<dbReference type="Gene3D" id="3.20.180.20">
    <property type="entry name" value="Dynein heavy chain, N-terminal domain 2"/>
    <property type="match status" value="1"/>
</dbReference>
<dbReference type="Gene3D" id="3.40.50.300">
    <property type="entry name" value="P-loop containing nucleotide triphosphate hydrolases"/>
    <property type="match status" value="5"/>
</dbReference>
<dbReference type="Gene3D" id="1.10.8.720">
    <property type="entry name" value="Region D6 of dynein motor"/>
    <property type="match status" value="1"/>
</dbReference>
<dbReference type="InterPro" id="IPR003593">
    <property type="entry name" value="AAA+_ATPase"/>
</dbReference>
<dbReference type="InterPro" id="IPR035699">
    <property type="entry name" value="AAA_6"/>
</dbReference>
<dbReference type="InterPro" id="IPR035706">
    <property type="entry name" value="AAA_9"/>
</dbReference>
<dbReference type="InterPro" id="IPR041658">
    <property type="entry name" value="AAA_lid_11"/>
</dbReference>
<dbReference type="InterPro" id="IPR042219">
    <property type="entry name" value="AAA_lid_11_sf"/>
</dbReference>
<dbReference type="InterPro" id="IPR026983">
    <property type="entry name" value="DHC"/>
</dbReference>
<dbReference type="InterPro" id="IPR054354">
    <property type="entry name" value="DYNC2H1-like_lid"/>
</dbReference>
<dbReference type="InterPro" id="IPR042222">
    <property type="entry name" value="Dynein_2_N"/>
</dbReference>
<dbReference type="InterPro" id="IPR043157">
    <property type="entry name" value="Dynein_AAA1S"/>
</dbReference>
<dbReference type="InterPro" id="IPR041466">
    <property type="entry name" value="Dynein_AAA5_ext"/>
</dbReference>
<dbReference type="InterPro" id="IPR041228">
    <property type="entry name" value="Dynein_C"/>
</dbReference>
<dbReference type="InterPro" id="IPR043160">
    <property type="entry name" value="Dynein_C_barrel"/>
</dbReference>
<dbReference type="InterPro" id="IPR024743">
    <property type="entry name" value="Dynein_HC_stalk"/>
</dbReference>
<dbReference type="InterPro" id="IPR024317">
    <property type="entry name" value="Dynein_heavy_chain_D4_dom"/>
</dbReference>
<dbReference type="InterPro" id="IPR004273">
    <property type="entry name" value="Dynein_heavy_D6_P-loop"/>
</dbReference>
<dbReference type="InterPro" id="IPR013602">
    <property type="entry name" value="Dynein_heavy_linker"/>
</dbReference>
<dbReference type="InterPro" id="IPR013594">
    <property type="entry name" value="Dynein_heavy_tail"/>
</dbReference>
<dbReference type="InterPro" id="IPR042228">
    <property type="entry name" value="Dynein_linker_3"/>
</dbReference>
<dbReference type="InterPro" id="IPR027417">
    <property type="entry name" value="P-loop_NTPase"/>
</dbReference>
<dbReference type="PANTHER" id="PTHR46532:SF4">
    <property type="entry name" value="AAA+ ATPASE DOMAIN-CONTAINING PROTEIN"/>
    <property type="match status" value="1"/>
</dbReference>
<dbReference type="PANTHER" id="PTHR46532">
    <property type="entry name" value="MALE FERTILITY FACTOR KL5"/>
    <property type="match status" value="1"/>
</dbReference>
<dbReference type="Pfam" id="PF12774">
    <property type="entry name" value="AAA_6"/>
    <property type="match status" value="1"/>
</dbReference>
<dbReference type="Pfam" id="PF12775">
    <property type="entry name" value="AAA_7"/>
    <property type="match status" value="1"/>
</dbReference>
<dbReference type="Pfam" id="PF12780">
    <property type="entry name" value="AAA_8"/>
    <property type="match status" value="1"/>
</dbReference>
<dbReference type="Pfam" id="PF12781">
    <property type="entry name" value="AAA_9"/>
    <property type="match status" value="1"/>
</dbReference>
<dbReference type="Pfam" id="PF18198">
    <property type="entry name" value="AAA_lid_11"/>
    <property type="match status" value="1"/>
</dbReference>
<dbReference type="Pfam" id="PF08385">
    <property type="entry name" value="DHC_N1"/>
    <property type="match status" value="1"/>
</dbReference>
<dbReference type="Pfam" id="PF08393">
    <property type="entry name" value="DHC_N2"/>
    <property type="match status" value="1"/>
</dbReference>
<dbReference type="Pfam" id="PF22597">
    <property type="entry name" value="DYN_lid"/>
    <property type="match status" value="1"/>
</dbReference>
<dbReference type="Pfam" id="PF17852">
    <property type="entry name" value="Dynein_AAA_lid"/>
    <property type="match status" value="1"/>
</dbReference>
<dbReference type="Pfam" id="PF18199">
    <property type="entry name" value="Dynein_C"/>
    <property type="match status" value="1"/>
</dbReference>
<dbReference type="Pfam" id="PF03028">
    <property type="entry name" value="Dynein_heavy"/>
    <property type="match status" value="1"/>
</dbReference>
<dbReference type="Pfam" id="PF12777">
    <property type="entry name" value="MT"/>
    <property type="match status" value="1"/>
</dbReference>
<dbReference type="SMART" id="SM00382">
    <property type="entry name" value="AAA"/>
    <property type="match status" value="3"/>
</dbReference>
<dbReference type="SUPFAM" id="SSF52540">
    <property type="entry name" value="P-loop containing nucleoside triphosphate hydrolases"/>
    <property type="match status" value="4"/>
</dbReference>
<gene>
    <name type="primary">DHC-8</name>
</gene>
<accession>Q27171</accession>
<accession>Q6LED7</accession>
<name>DYHC_PARTE</name>
<evidence type="ECO:0000250" key="1"/>
<evidence type="ECO:0000255" key="2"/>
<evidence type="ECO:0000256" key="3">
    <source>
        <dbReference type="SAM" id="MobiDB-lite"/>
    </source>
</evidence>
<evidence type="ECO:0000305" key="4"/>
<sequence>MEESETQLNVKVQEQGKLYSANEIENFNQYLSAICLSLLIIDKDQWNVACHEDVNQQNICQFLSDSQIKALIVSKTVENEKFNIQIRSEYEASNNYAHTICFLKRHTFQYDNQLQPQQFSNHVQVINVGYAESQGGANPFTLSHNYVQNCFIPIFTQYKGEIDKKRIVDQSSYNDLIKKLNEVNLAFIKCRQNVEVPEIILQFDPRIKEAVKQRGGKPTIEDAAQLNKPDIVQSISQTVTRWISDINQISNTKLELTNASIVDEINYWMSMERSLFFIENQLKQPEVDFTIEVLTQAKKMNITAQFKEIALKQSLQKCQSCNQFMKEFPINNLLIATNLVEIKDAMIQIFQHMKKLSNIQETYTIPRSLQLAESFSRELTNEMIKYFKGFQILHIKYVDFKGLIIKTQEIFSQWDEEYKIFKQSIVKKSVHQKDQYGQFEHIKLQKQIQHIQRLREMHENLKEVIEQIIQNDQEEQKENVQQFATLQEIQQAYDIFKNVEVFDLSRDGEDQFFRALKQYEIAIESVEATITTNLRDSLGSASSAKEMFRILAKFNKLFSRPRIKGAIQEYQSQLLKTVHKDIQSLQNKFKETYQKSQNSRLASARDIPLTSGFVIWSKQLQIRLQKYMQKVEQILGPQWAEDTDGKKCKEMGETFERILDSGPALEDWKQEINHHNKAVSQNEKLFEVVTRRRGLEIRVNYEKKLSQLFKEVRNLSNMKTKVPYSISHIANDAKASYPFALSLQESLHTYIQITSQLNAKSAKLVAALRKEVQLQIGQGFNYLWTHKTQLQPYVKKFTDKVFELEQAVNGLNERIGQIESLCEAMKTCPVDSLADKLKDIQEVIDSLCFNNFSNLHIWIQDIDKQIESILCDRVTVQMKEWLNQFINYQKIQERGLVNQTVVHELKLQDQIIYVDPPVEYAKYFWFQEFHKMIGQICSLPRLVANRFDNTIQQNTGPWGTQRDLDYSTTINKINQQLIKDAYSQIGQLLEDMEQYVQTWLNYQSLWELDIKQVEQILQDDIEKWQQMLTDIKQGRATFDNSTTEEHFGAIIIDYRMVQVKINHKYDAWHKELLNHFGNKFGEQLRVFNKNVTTEKEKLLKINFQDLTSDIIESITIIQEQDKKFPGWSADIESFKNGQKVLDRQRYQYPGDWLSFEQVEMQWNQFKQIRSKKLQSQESEMNNIQSKIQQDERYLNQQIQEIEEQWKTSKPDSGDCSPNEAEQILKSLNEQLISVQEKYEKCSQAKEILKMDPPTHQQKLNVLLESISDLQDVWQELGKIWKVMQSIKEQLISALQNKKIKDTCDEAQKQLNGVSTKTRNYDAFEKMKEKVKNYIKMNKLIMDLKDESMKERHWRQLLSKLKINESLNQLQMQHLWNANLLNYENLAKDIMTVARGEQVLETMISQVKDFWNSFELELVKYQTKCKLIRGWDELFQKLDEDLNNLASMKISPFYKTFEAEISQWDDKLQKVKLTMDIWIDVQRRWVYLEGIFFGSSDIKTQLQNEYNKFKDIDSQFTNLMKKVAQKPQLMDVQGIPNLAKTLERLSDFLQKIQKALGDYLETQRQAFARFYFVGDDDLLDIIGNSKDVTNVQRHFPKMYAGIVQLQSRKDGNDDVVLGMSSKEGEVVPFSKEVKIAEDPRINIWLGKVDNEMMNSLALDLEKSVLDIQANQQNRMKVIEEHPAQIILLALQVGWCFSVESSFNNEQQMKQTLQYVLEFLSELAESVLKDHPKQLRQKFEQIITDFVHQRDVIRLLMNNKINSKNDFGWQYHMRFNWNSKEADPGKRLLIQMGNAQFHYGFEYLGVAEKLVQTPLTDKCFLTLTQALHLRMGGSPFGPAGTGKTESVKALGAQLGRFVLVFNCDETFDFNAMGRIFVGLCQVGAWGCFDEFNRLEERMLSACSQQILLIQTGLREKQKQIELMGKDVKLSSQMGVFVTMNPGYAGRSNLPENLKQLFRQMAMVKPDRELIAQVMLFSQGFRTAEKLAGKIVSLFELCDNQLSSQPHYDFGLRALKSVLNSAGNMKRQEMIDRKQEPVPQSEIEEFEQTILLRSVCDTVVPKLIKDDIKLLETLLQGVFPGSCIPEIKEEQLRKELALACQRKNLQSSKNFIEKVLQLYQIQRLQHGLMLVGPCGCGKSAAWRVLLEAMYKCDKVKGEFYIVDPKAISKDELYGRLDNTTLEWTDGVFTSILRKIISNQRQESTRRHWIIFDGDVDPEWAENLNSVLDDNKLLTLPNGERLAIPPNVRMIFEVETLKYATLATVSRCGMVWFSEETINDENIFYHFLERLKQDDYDQQKSEDDNNKQVNSQESELRTKCVKALESIIKFLSQFLQIAQKPEYKHVMEFTRIRVLESTFALVRRSISNIIEYNENNSEVPLEDDQINDFMVKQFLIAVMWGVAGSMNLYQRTQYSKEICQLLPHNVILPQFNDSAPSLIDFEVTLPEAQWSQYKKKVPQIEIDPQRVTDADLIIETVDTLRHKDVLCGWLNEHRPFLLCGPPGSGKTMTLMSTLKALTDFEMIFINFSSSTMPQLIIKQFDHYCEYKKTTNGVFLQPKNQKWLVVFCDEINLPDQDKYGTMAIITFLRQLTEQHGFWRSSDRQWISLDRIQFVGACNPPTDVGRKPLTPRFLRHCPLILVDFPGPESLKQIYGTFNKAMLRRTVNLKQYSEQLTNAMVEFYTKSQQHFTADQQAHYIYSPRELTRWKYALNEALEPLESVEDLVRLWAHEGLRLFQDRLVHEHEKEWCNKLIDQVAYNNFNNLKDEALQRPILFSNYLHKVYQSVDREELRKYIQGRLKQFNEEELSVPLVVFDDVLDHILRIDRVLKQPLGHLLLVGSSGVGKTTLTRFVSWINNLTVFQIKAGRDYQLADFDNDLREVMKRAGAKGEKITFIFDESNVLGPSFLEKMNALLASGEIPGLFENDEYLALINLLKENSNQNKQFDSSEEQLFKNFTYQVQRNLHVVFTMNPKNPDFSNRTASSPALFNRCVIDWFGDWTNEALFQVGKAFTMYIDPPENAFSKKIKDETQRQHILVSTLVYIQNTIIELNNKLQKGAKRFNYITPRDYLDFLKHFEKLHNEKKSQLEDQQLHLNVGLDKLKETEQQVLEMQKSLDQKKVELLTKERQAGEKLQTIIEEKKIAEKKKEDSTRLSSDAEKKAKEMEVRQSQVNKELNEALPALENAKQCVNSIKKDDLNQIRALGSPPALVKLTMEAVVCAINSLEKSPEWKDVQKSMANMNFINNVINFNTETMPPKVKKFILTKYLSAQEWNIDRINFASKAAGPLAMWLDSQLKYADILQKVDPLRQEVAKLLQESDELNTQKKIYDDEVAAAEAKIHNLQQEYSELISQKESIKSEMLKVQEKVTRSQALLSDLSGERVRWEEASQNFKSQLATMIGDVLLLLAIPVLYWVLDHFYRKVVINTWKDYLSGQANIFYRQDLSLIEFLSRPSDRLNWQLHTLPSDDLCMENAIILYRFQRYPLVIDPSGQALSFISSLYKDKKLARTSFTDESFLKTLETCLRFGCPLLVQDVEKVDPILNSVLNNETYKTGGRVLIRVGNQEIDFSQGFTMFMITRDSTARFTPDLCSRVTFVNFTVTQSSLQEQCLNIFLRNESPETEEKRLNLMKLQGEYIVKLRELEDQLLDSLNNSRGSILEDEKVIQTLEKLKKEAAVIVQEMKQADTIMNEVMNTTHSYVPLANTTSKIFFSLTSLANIHYLYQFSLQFFMDTIYNVLNKNEQLQKIPKQDLIKRRILIFNEMFKEIYKRMNFSLLQEDKLVFAITLAQVKLGDNTLGQEFLNVFKPPTVMETTFSNTFLQGKLSIQQLKQLEGITQQNQTFNRLIDNLNKNEDRWLNFLNDEAPENDIPTQWYNEVQRDDIVKLDWIDSHQLKRQLDDLHILRIFRADRFQIIARKLINQILGEGFMDEQTVDMKLVVEKEASNKIPILLCSAPGFDPSFKVEQLSREMGIKLTSVAIGSAEGFDQAEYEITQSVKSGSWVMLKNVHLATSWLNDLEKKLFRLTPNANFRIFLTMEFNPKIPTTLIRQSYKLVFEPPDGIKASLIRTFKTVLSQQRTDRQPVERARLHFLLAWLHAVILERLRFTPIGWSKTYEFNEADQRCSLDLIDEYVDALGIRQNIDPSKLPWDAFRTILTQNLYGGKVDNEYDQKILQSLVEQFFTEQSFNHNHPLFFTLEGKEAITVPEGRTYLDFMQWIEQLPKTESPEWSGLPSNVERVQRDQLTQKLITKVQNLQQEGEEEITQIEVQTEKTQKKDNKKSDQVQWLQDLLEKVEKFKAILPNKISPLERTADSINDPLFRFLDREITVASKLLKAVRQNIEELIQLAQGKILATNILRQLAKDVFNNIVPAQWNKYNVITMPLNDWVGDFKRRIDQFDLLGKTKDFQKGQVWFGGLLFPEAYLTATRQYVAQANKWSLEELELQMIPEDQGIDEDSFVIEGVSMEGGHLDSKTLQVRIVNEISVALKPITLKWCKTSQKGVVGDDEIVLPVYLNKTRKNLIFSLKVKMGKLNRYTLYQKGLSFILFN</sequence>
<reference key="1">
    <citation type="journal article" date="1995" name="Mol. Biol. Cell">
        <title>The dynein genes of Paramecium tetraurelia: the structure and expression of the ciliary beta and cytoplasmic heavy chains.</title>
        <authorList>
            <person name="Kandl K.A."/>
            <person name="Forney J.D."/>
            <person name="Asai D.J."/>
        </authorList>
    </citation>
    <scope>NUCLEOTIDE SEQUENCE [GENOMIC DNA]</scope>
    <source>
        <strain>Stock 51</strain>
    </source>
</reference>
<reference key="2">
    <citation type="journal article" date="1994" name="J. Cell Sci.">
        <title>The dynein genes of Paramecium tetraurelia. Sequences adjacent to the catalytic P-loop identify cytoplasmic and axonemal heavy chain isoforms.</title>
        <authorList>
            <person name="Asai D.J."/>
            <person name="Beckwith S.M."/>
            <person name="Kandl K.A."/>
            <person name="Keating H.H."/>
            <person name="Tjandra H."/>
            <person name="Forney J.D."/>
        </authorList>
    </citation>
    <scope>NUCLEOTIDE SEQUENCE [MRNA] OF 1836-1889</scope>
    <source>
        <strain>Stock 51</strain>
    </source>
</reference>
<comment type="function">
    <text>Cytoplasmic dynein acts as a motor for the intracellular retrograde motility of vesicles and organelles along microtubules. Dynein has ATPase activity; the force-producing power stroke is thought to occur on release of ADP.</text>
</comment>
<comment type="subunit">
    <text>Consists of at least two heavy chains and a number of intermediate and light chains.</text>
</comment>
<comment type="subcellular location">
    <subcellularLocation>
        <location>Cytoplasm</location>
        <location>Cytoskeleton</location>
    </subcellularLocation>
</comment>
<comment type="domain">
    <text>Dynein heavy chains probably consist of an N-terminal stem (which binds cargo and interacts with other dynein components), and the head or motor domain. The motor contains six tandemly-linked AAA domains in the head, which form a ring. A stalk-like structure (formed by two of the coiled coil domains) protrudes between AAA 4 and AAA 5 and terminates in a microtubule-binding site. A seventh domain may also contribute to this ring; it is not clear whether the N-terminus or the C-terminus forms this extra domain. There are four well-conserved and two non-conserved ATPase sites, one per AAA domain. Probably only one of these (within AAA 1) actually hydrolyzes ATP, the others may serve a regulatory function.</text>
</comment>
<comment type="similarity">
    <text evidence="4">Belongs to the dynein heavy chain family.</text>
</comment>
<protein>
    <recommendedName>
        <fullName>Dynein heavy chain, cytoplasmic</fullName>
    </recommendedName>
    <alternativeName>
        <fullName>DHC08</fullName>
    </alternativeName>
    <alternativeName>
        <fullName>Dynein heavy chain, cytosolic</fullName>
        <shortName>DYHC</shortName>
    </alternativeName>
</protein>